<proteinExistence type="evidence at protein level"/>
<accession>A0A068Q609</accession>
<keyword id="KW-0349">Heme</keyword>
<keyword id="KW-0408">Iron</keyword>
<keyword id="KW-0472">Membrane</keyword>
<keyword id="KW-0479">Metal-binding</keyword>
<keyword id="KW-0503">Monooxygenase</keyword>
<keyword id="KW-0560">Oxidoreductase</keyword>
<keyword id="KW-0812">Transmembrane</keyword>
<keyword id="KW-1133">Transmembrane helix</keyword>
<sequence>MALLTLFNQIWQEGQLQSSTSSFNIFLVPILCLSIFILFSLTRSSSPSEKNRKLKLPPSPPRLPWIGNLHQLGSFPHRSLRALSKKYGDVMFMHFGKVPTLIVSSAEMAKDVMKTQDIVFCSRPQTTAPSILFYDGHDIAFAPYGEYWRQVRRICVLELLSLKRVHQFQYARVEEVAELVSKIRKASASANGAPINLGELLVSTSNNIICRCILGQKFEDKEDNWFGETTKELMTQVMSFSFGDFFPSLKWIDRARGYLAYLKSIWLEFDKFFDKLIDEHKAAQKEGKPRKKDIVDILLDVQNDGSLDFELTTSNVKAILQDMFVGGSDTSWTAAIWLMSELSQNPRVMKKVQEEVRRVAGKRGYVEESDINEMKYLTCVIKENLRLHPPAPLLLPREAMSDVKLGGFDIPAKTQVFVNAYAVQRDPKVWDKPDEFMPERFEENNVGFVGQDFELIPFGAGRRVCPGLAFGVASAQYVLANMLYWFDWKLPSGGSKLAETLDMSEVYGLTVHKKSPLYLVPTPYSP</sequence>
<gene>
    <name evidence="4" type="primary">CYP71AN24</name>
</gene>
<feature type="chain" id="PRO_0000449231" description="Phenylacetaldehyde oxime monooxygenase CYP71AN24">
    <location>
        <begin position="1"/>
        <end position="526"/>
    </location>
</feature>
<feature type="transmembrane region" description="Helical" evidence="2">
    <location>
        <begin position="22"/>
        <end position="42"/>
    </location>
</feature>
<feature type="binding site" description="axial binding residue" evidence="1">
    <location>
        <position position="465"/>
    </location>
    <ligand>
        <name>heme</name>
        <dbReference type="ChEBI" id="CHEBI:30413"/>
    </ligand>
    <ligandPart>
        <name>Fe</name>
        <dbReference type="ChEBI" id="CHEBI:18248"/>
    </ligandPart>
</feature>
<evidence type="ECO:0000250" key="1">
    <source>
        <dbReference type="UniProtKB" id="P04798"/>
    </source>
</evidence>
<evidence type="ECO:0000255" key="2"/>
<evidence type="ECO:0000269" key="3">
    <source>
    </source>
</evidence>
<evidence type="ECO:0000303" key="4">
    <source>
    </source>
</evidence>
<evidence type="ECO:0000305" key="5"/>
<comment type="function">
    <text evidence="3">Involved in L-phenylalanine-derived cyanogenic glycoside biosynthesis, including prunasin and amygdalin defensive agents (PubMed:25015725). Catalyzes the conversion of phenylacetaldoxime (PAOx) and phenylacetonitrile (PAN) into mandelonitrile (MAN) (PubMed:25015725). To a lower extent, can convert various aromatic aldoximes and nitriles; mediates the transformation of 4-hydroxyphenylacetaldoxime, 4-hydroxyphenylacetonitrile, indole-3-acetal-doxime and indole-3-acetonitrile into the corresponding hydroxynitriles, but cannot use the aliphatic compounds 2-methylpropanaloxime and 2-methylpropanenitrile as substrates (PubMed:25015725).</text>
</comment>
<comment type="catalytic activity">
    <reaction evidence="3">
        <text>(E)-phenylacetaldehyde oxime + reduced [NADPH--hemoprotein reductase] + O2 = (R)-mandelonitrile + oxidized [NADPH--hemoprotein reductase] + 2 H2O + H(+)</text>
        <dbReference type="Rhea" id="RHEA:52156"/>
        <dbReference type="Rhea" id="RHEA-COMP:11964"/>
        <dbReference type="Rhea" id="RHEA-COMP:11965"/>
        <dbReference type="ChEBI" id="CHEBI:15377"/>
        <dbReference type="ChEBI" id="CHEBI:15378"/>
        <dbReference type="ChEBI" id="CHEBI:15379"/>
        <dbReference type="ChEBI" id="CHEBI:18450"/>
        <dbReference type="ChEBI" id="CHEBI:47793"/>
        <dbReference type="ChEBI" id="CHEBI:57618"/>
        <dbReference type="ChEBI" id="CHEBI:58210"/>
        <dbReference type="EC" id="1.14.14.44"/>
    </reaction>
</comment>
<comment type="catalytic activity">
    <reaction evidence="3">
        <text>phenylacetonitrile + reduced [NADPH--hemoprotein reductase] + O2 = (R)-mandelonitrile + oxidized [NADPH--hemoprotein reductase] + H2O + H(+)</text>
        <dbReference type="Rhea" id="RHEA:52164"/>
        <dbReference type="Rhea" id="RHEA-COMP:11964"/>
        <dbReference type="Rhea" id="RHEA-COMP:11965"/>
        <dbReference type="ChEBI" id="CHEBI:15377"/>
        <dbReference type="ChEBI" id="CHEBI:15378"/>
        <dbReference type="ChEBI" id="CHEBI:15379"/>
        <dbReference type="ChEBI" id="CHEBI:18450"/>
        <dbReference type="ChEBI" id="CHEBI:25979"/>
        <dbReference type="ChEBI" id="CHEBI:57618"/>
        <dbReference type="ChEBI" id="CHEBI:58210"/>
        <dbReference type="EC" id="1.14.14.77"/>
    </reaction>
</comment>
<comment type="cofactor">
    <cofactor evidence="1">
        <name>heme</name>
        <dbReference type="ChEBI" id="CHEBI:30413"/>
    </cofactor>
</comment>
<comment type="biophysicochemical properties">
    <kinetics>
        <KM evidence="3">3.9 uM for phenylacetaldoxime (in the presence of NADPH at pH 7.6 and 30 degrees Celsius)</KM>
        <KM evidence="3">18.5 uM for phenylacetonitrile (in the presence of NADPH at pH 7.6 and 30 degrees Celsius)</KM>
        <KM evidence="3">7 uM for 4-hydroxyphenylacetaldoxime (in the presence of NADPH at pH 7.6 and 30 degrees Celsius)</KM>
        <KM evidence="3">195.5 uM for 4-hydroxyphenylacetonitrile (in the presence of NADPH at pH 7.6 and 30 degrees Celsius)</KM>
        <KM evidence="3">8.2 uM for indole-3-acetaldoxime (in the presence of NADPH at pH 7.6 and 30 degrees Celsius)</KM>
        <KM evidence="3">751.1 uM for indole-3-acetonitrile (in the presence of NADPH at pH 7.6 and 30 degrees Celsius)</KM>
        <text evidence="3">kcat is 46.3 min(-1) with phenylacetaldoxime as substrate (in the presence of NADPH at pH 7.6 and 30 degrees Celsius) (PubMed:25015725). kcat is 24.2 min(-1) with phenylacetonitrile as substrate (in the presence of NADPH at pH 7.6 and 30 degrees Celsius) (PubMed:25015725). kcat is 37 min(-1) with 4-hydroxyphenylacetaldoxime as substrate (in the presence of NADPH at pH 7.6 and 30 degrees Celsius) (PubMed:25015725). kcat is 34 min(-1) with 4-hydroxyphenylacetonitrile as substrate (in the presence of NADPH at pH 7.6 and 30 degrees Celsius) (PubMed:25015725). kcat is 1.7 min(-1) with indole-3-acetaldoxime as substrate (in the presence of NADPH at pH 7.6 and 30 degrees Celsius) (PubMed:25015725). kcat is 6.1 min(-1) with indole-3-acetonitrile as substrate (in the presence of NADPH at pH 7.6 and 30 degrees Celsius) (PubMed:25015725).</text>
    </kinetics>
</comment>
<comment type="subcellular location">
    <subcellularLocation>
        <location evidence="2">Membrane</location>
        <topology evidence="2">Single-pass membrane protein</topology>
    </subcellularLocation>
</comment>
<comment type="tissue specificity">
    <text evidence="3">Expressed in seedlings and leaves.</text>
</comment>
<comment type="similarity">
    <text evidence="5">Belongs to the cytochrome P450 family.</text>
</comment>
<dbReference type="EC" id="1.14.14.44" evidence="3"/>
<dbReference type="EC" id="1.14.14.77" evidence="3"/>
<dbReference type="EMBL" id="AB920492">
    <property type="protein sequence ID" value="BAP15888.1"/>
    <property type="molecule type" value="mRNA"/>
</dbReference>
<dbReference type="RefSeq" id="NP_001313440.1">
    <property type="nucleotide sequence ID" value="NM_001326511.1"/>
</dbReference>
<dbReference type="SMR" id="A0A068Q609"/>
<dbReference type="GeneID" id="103337951"/>
<dbReference type="BioCyc" id="MetaCyc:MONOMER-20057"/>
<dbReference type="BRENDA" id="1.14.14.44">
    <property type="organism ID" value="8044"/>
</dbReference>
<dbReference type="SABIO-RK" id="A0A068Q609"/>
<dbReference type="Proteomes" id="UP000694861">
    <property type="component" value="Unplaced"/>
</dbReference>
<dbReference type="GO" id="GO:0016020">
    <property type="term" value="C:membrane"/>
    <property type="evidence" value="ECO:0007669"/>
    <property type="project" value="UniProtKB-SubCell"/>
</dbReference>
<dbReference type="GO" id="GO:0020037">
    <property type="term" value="F:heme binding"/>
    <property type="evidence" value="ECO:0007669"/>
    <property type="project" value="InterPro"/>
</dbReference>
<dbReference type="GO" id="GO:0005506">
    <property type="term" value="F:iron ion binding"/>
    <property type="evidence" value="ECO:0007669"/>
    <property type="project" value="InterPro"/>
</dbReference>
<dbReference type="GO" id="GO:0004497">
    <property type="term" value="F:monooxygenase activity"/>
    <property type="evidence" value="ECO:0007669"/>
    <property type="project" value="UniProtKB-KW"/>
</dbReference>
<dbReference type="GO" id="GO:0016705">
    <property type="term" value="F:oxidoreductase activity, acting on paired donors, with incorporation or reduction of molecular oxygen"/>
    <property type="evidence" value="ECO:0007669"/>
    <property type="project" value="InterPro"/>
</dbReference>
<dbReference type="CDD" id="cd11072">
    <property type="entry name" value="CYP71-like"/>
    <property type="match status" value="1"/>
</dbReference>
<dbReference type="FunFam" id="1.10.630.10:FF:000011">
    <property type="entry name" value="Cytochrome P450 83B1"/>
    <property type="match status" value="1"/>
</dbReference>
<dbReference type="Gene3D" id="1.10.630.10">
    <property type="entry name" value="Cytochrome P450"/>
    <property type="match status" value="1"/>
</dbReference>
<dbReference type="InterPro" id="IPR001128">
    <property type="entry name" value="Cyt_P450"/>
</dbReference>
<dbReference type="InterPro" id="IPR017972">
    <property type="entry name" value="Cyt_P450_CS"/>
</dbReference>
<dbReference type="InterPro" id="IPR002401">
    <property type="entry name" value="Cyt_P450_E_grp-I"/>
</dbReference>
<dbReference type="InterPro" id="IPR036396">
    <property type="entry name" value="Cyt_P450_sf"/>
</dbReference>
<dbReference type="PANTHER" id="PTHR47955:SF15">
    <property type="entry name" value="CYTOCHROME P450 71A2-LIKE"/>
    <property type="match status" value="1"/>
</dbReference>
<dbReference type="PANTHER" id="PTHR47955">
    <property type="entry name" value="CYTOCHROME P450 FAMILY 71 PROTEIN"/>
    <property type="match status" value="1"/>
</dbReference>
<dbReference type="Pfam" id="PF00067">
    <property type="entry name" value="p450"/>
    <property type="match status" value="1"/>
</dbReference>
<dbReference type="PRINTS" id="PR00463">
    <property type="entry name" value="EP450I"/>
</dbReference>
<dbReference type="PRINTS" id="PR00385">
    <property type="entry name" value="P450"/>
</dbReference>
<dbReference type="SUPFAM" id="SSF48264">
    <property type="entry name" value="Cytochrome P450"/>
    <property type="match status" value="1"/>
</dbReference>
<dbReference type="PROSITE" id="PS00086">
    <property type="entry name" value="CYTOCHROME_P450"/>
    <property type="match status" value="1"/>
</dbReference>
<name>C7124_PRUMU</name>
<reference key="1">
    <citation type="journal article" date="2014" name="Plant Mol. Biol.">
        <title>Identification and characterization of CYP79D16 and CYP71AN24 catalyzing the first and second steps in L-phenylalanine-derived cyanogenic glycoside biosynthesis in the Japanese apricot, Prunus mume Sieb. et Zucc.</title>
        <authorList>
            <person name="Yamaguchi T."/>
            <person name="Yamamoto K."/>
            <person name="Asano Y."/>
        </authorList>
    </citation>
    <scope>NUCLEOTIDE SEQUENCE [MRNA]</scope>
    <scope>FUNCTION</scope>
    <scope>CATALYTIC ACTIVITY</scope>
    <scope>TISSUE SPECIFICITY</scope>
    <scope>BIOPHYSICOCHEMICAL PROPERTIES</scope>
    <source>
        <strain>cv. Nanko</strain>
        <tissue>Seedling</tissue>
    </source>
</reference>
<organism>
    <name type="scientific">Prunus mume</name>
    <name type="common">Japanese apricot</name>
    <name type="synonym">Armeniaca mume</name>
    <dbReference type="NCBI Taxonomy" id="102107"/>
    <lineage>
        <taxon>Eukaryota</taxon>
        <taxon>Viridiplantae</taxon>
        <taxon>Streptophyta</taxon>
        <taxon>Embryophyta</taxon>
        <taxon>Tracheophyta</taxon>
        <taxon>Spermatophyta</taxon>
        <taxon>Magnoliopsida</taxon>
        <taxon>eudicotyledons</taxon>
        <taxon>Gunneridae</taxon>
        <taxon>Pentapetalae</taxon>
        <taxon>rosids</taxon>
        <taxon>fabids</taxon>
        <taxon>Rosales</taxon>
        <taxon>Rosaceae</taxon>
        <taxon>Amygdaloideae</taxon>
        <taxon>Amygdaleae</taxon>
        <taxon>Prunus</taxon>
    </lineage>
</organism>
<protein>
    <recommendedName>
        <fullName evidence="4">Phenylacetaldehyde oxime monooxygenase CYP71AN24</fullName>
        <ecNumber evidence="3">1.14.14.44</ecNumber>
    </recommendedName>
    <alternativeName>
        <fullName evidence="4">Cytochrome P450 71AN24</fullName>
    </alternativeName>
    <alternativeName>
        <fullName evidence="4">Phenylacetonitrile alpha-monooxygenase CYP71AN24</fullName>
        <ecNumber evidence="3">1.14.14.77</ecNumber>
    </alternativeName>
</protein>